<organism>
    <name type="scientific">Rotavirus A (strain RVA/Cow/United States/WC3/1981/G6P7[5])</name>
    <name type="common">RV-A</name>
    <name type="synonym">Rotavirus (strain Wistar calf 3)</name>
    <dbReference type="NCBI Taxonomy" id="578828"/>
    <lineage>
        <taxon>Viruses</taxon>
        <taxon>Riboviria</taxon>
        <taxon>Orthornavirae</taxon>
        <taxon>Duplornaviricota</taxon>
        <taxon>Resentoviricetes</taxon>
        <taxon>Reovirales</taxon>
        <taxon>Sedoreoviridae</taxon>
        <taxon>Rotavirus</taxon>
        <taxon>Rotavirus A</taxon>
    </lineage>
</organism>
<feature type="chain" id="PRO_0000369515" description="Non-structural protein 6">
    <location>
        <begin position="1"/>
        <end position="98"/>
    </location>
</feature>
<comment type="subunit">
    <text evidence="1">Interacts with NSP2 and NSP5.</text>
</comment>
<comment type="subcellular location">
    <subcellularLocation>
        <location evidence="1">Host cytoplasm</location>
    </subcellularLocation>
    <subcellularLocation>
        <location evidence="1">Host mitochondrion</location>
    </subcellularLocation>
    <text evidence="1">Found in spherical cytoplasmic structures, called viral factories, that appear early after infection and are the site of viral replication and packaging.</text>
</comment>
<comment type="similarity">
    <text evidence="1">Belongs to the rotavirus A NSP6 family.</text>
</comment>
<organismHost>
    <name type="scientific">Bos taurus</name>
    <name type="common">Bovine</name>
    <dbReference type="NCBI Taxonomy" id="9913"/>
</organismHost>
<protein>
    <recommendedName>
        <fullName evidence="1">Non-structural protein 6</fullName>
        <shortName evidence="1">NSP6</shortName>
    </recommendedName>
</protein>
<name>NSP6_ROTW3</name>
<accession>P0C712</accession>
<evidence type="ECO:0000255" key="1">
    <source>
        <dbReference type="HAMAP-Rule" id="MF_04093"/>
    </source>
</evidence>
<dbReference type="EMBL" id="EF990702">
    <property type="status" value="NOT_ANNOTATED_CDS"/>
    <property type="molecule type" value="Genomic_RNA"/>
</dbReference>
<dbReference type="Proteomes" id="UP000007181">
    <property type="component" value="Genome"/>
</dbReference>
<dbReference type="GO" id="GO:0033650">
    <property type="term" value="C:host cell mitochondrion"/>
    <property type="evidence" value="ECO:0007669"/>
    <property type="project" value="UniProtKB-SubCell"/>
</dbReference>
<dbReference type="HAMAP" id="MF_04093">
    <property type="entry name" value="ROTA_NSP6"/>
    <property type="match status" value="1"/>
</dbReference>
<dbReference type="InterPro" id="IPR006950">
    <property type="entry name" value="Rotavirus_NSP6"/>
</dbReference>
<dbReference type="Pfam" id="PF04866">
    <property type="entry name" value="Rota_NS6"/>
    <property type="match status" value="1"/>
</dbReference>
<reference key="1">
    <citation type="journal article" date="2008" name="J. Virol.">
        <title>Full genome-based classification of rotaviruses reveals a common origin between human Wa-Like and porcine rotavirus strains and human DS-1-like and bovine rotavirus strains.</title>
        <authorList>
            <person name="Matthijnssens J."/>
            <person name="Ciarlet M."/>
            <person name="Heiman E.M."/>
            <person name="Arijs I."/>
            <person name="Delbeke T."/>
            <person name="McDonald S.M."/>
            <person name="Palombo E.A."/>
            <person name="Iturriza-Gomara M."/>
            <person name="Maes P."/>
            <person name="Patton J.T."/>
            <person name="Rahman M."/>
            <person name="Van Ranst M."/>
        </authorList>
    </citation>
    <scope>NUCLEOTIDE SEQUENCE [GENOMIC RNA]</scope>
</reference>
<proteinExistence type="inferred from homology"/>
<sequence>MNHLQQRQLFLENLLVGVNNTFHQMQKHSVNTCCQSLQKILDHLILLQTIHSPAFRLDRMQLRQMQTLACLWIHQHNHGHQAMLGAIKWISPLIKELK</sequence>
<keyword id="KW-1035">Host cytoplasm</keyword>
<keyword id="KW-1045">Host mitochondrion</keyword>